<evidence type="ECO:0000250" key="1">
    <source>
        <dbReference type="UniProtKB" id="P49841"/>
    </source>
</evidence>
<evidence type="ECO:0000255" key="2">
    <source>
        <dbReference type="PROSITE-ProRule" id="PRU00159"/>
    </source>
</evidence>
<evidence type="ECO:0000255" key="3">
    <source>
        <dbReference type="PROSITE-ProRule" id="PRU10027"/>
    </source>
</evidence>
<evidence type="ECO:0000256" key="4">
    <source>
        <dbReference type="SAM" id="MobiDB-lite"/>
    </source>
</evidence>
<evidence type="ECO:0000269" key="5">
    <source>
    </source>
</evidence>
<evidence type="ECO:0000269" key="6">
    <source>
    </source>
</evidence>
<evidence type="ECO:0000269" key="7">
    <source>
    </source>
</evidence>
<evidence type="ECO:0000269" key="8">
    <source>
    </source>
</evidence>
<evidence type="ECO:0000305" key="9"/>
<accession>Q91757</accession>
<accession>Q91627</accession>
<sequence>MSGRPRTTSFAESCKPVQQPSSFGSMKVSRDKDGSKVTTVVATPGQGPDRQQEVTYTDTKVIGNGSFGVVYQAKLCDTGELVAIKKVLQDKRFKNRELQIMRKLDHCNIVRLRYFFYSSGEKKDEVYLNLVLDYVPETVYRVARHYSRAKQALPIIYVKLYMYQLFRSLAYIHSFGICHRDIKPQNLLLDPETAVLKLCDFGSAKQLVRGEPNVSYICSRYYRAPELIFGATDYTSSIDVWSAGCVLAELLLGQPIFPGDSGVDQLVEIIKVLGTPTREQIREMNPNYTEFKFPQIKAHPWTKVFRARTPPEAIALCSRLLEYTPTSRLTPLDACAHSFFDELRDPNLKLPNGREFPALFNFTTQELSSNPSLSSILIPAHARNQAAVSTTSNTTSTSDSNTGERGSTNNAASASASNSS</sequence>
<keyword id="KW-0067">ATP-binding</keyword>
<keyword id="KW-0090">Biological rhythms</keyword>
<keyword id="KW-1003">Cell membrane</keyword>
<keyword id="KW-0963">Cytoplasm</keyword>
<keyword id="KW-0217">Developmental protein</keyword>
<keyword id="KW-0221">Differentiation</keyword>
<keyword id="KW-0418">Kinase</keyword>
<keyword id="KW-0472">Membrane</keyword>
<keyword id="KW-0524">Neurogenesis</keyword>
<keyword id="KW-0547">Nucleotide-binding</keyword>
<keyword id="KW-0539">Nucleus</keyword>
<keyword id="KW-0597">Phosphoprotein</keyword>
<keyword id="KW-1185">Reference proteome</keyword>
<keyword id="KW-0723">Serine/threonine-protein kinase</keyword>
<keyword id="KW-0808">Transferase</keyword>
<keyword id="KW-0879">Wnt signaling pathway</keyword>
<reference key="1">
    <citation type="journal article" date="1995" name="Development">
        <title>Regulation of Spemann organizer formation by the intracellular kinase Xgsk-3.</title>
        <authorList>
            <person name="Pierce S.B."/>
            <person name="Kimelman D."/>
        </authorList>
    </citation>
    <scope>NUCLEOTIDE SEQUENCE [MRNA]</scope>
    <scope>FUNCTION</scope>
    <scope>MUTAGENESIS OF LYS-85</scope>
    <scope>DEVELOPMENTAL STAGE</scope>
</reference>
<reference key="2">
    <citation type="journal article" date="1995" name="Proc. Natl. Acad. Sci. U.S.A.">
        <title>Role of glycogen synthase kinase 3 beta as a negative regulator of dorsoventral axis formation in Xenopus embryos.</title>
        <authorList>
            <person name="Dominguez I."/>
            <person name="Itoh K."/>
            <person name="Sokol S.Y."/>
        </authorList>
    </citation>
    <scope>NUCLEOTIDE SEQUENCE [MRNA]</scope>
    <scope>FUNCTION</scope>
    <scope>MUTAGENESIS OF LYS-85</scope>
    <scope>DEVELOPMENTAL STAGE</scope>
</reference>
<reference key="3">
    <citation type="submission" date="2005-11" db="EMBL/GenBank/DDBJ databases">
        <authorList>
            <consortium name="NIH - Xenopus Gene Collection (XGC) project"/>
        </authorList>
    </citation>
    <scope>NUCLEOTIDE SEQUENCE [LARGE SCALE MRNA]</scope>
    <source>
        <tissue>Embryo</tissue>
    </source>
</reference>
<reference key="4">
    <citation type="journal article" date="1998" name="Mol. Cell. Neurosci.">
        <title>The role of GSK3beta in regulating neuronal differentiation in Xenopus laevis.</title>
        <authorList>
            <person name="Marcus E.A."/>
            <person name="Kintner C."/>
            <person name="Harris W."/>
        </authorList>
    </citation>
    <scope>FUNCTION</scope>
    <scope>DEVELOPMENTAL STAGE</scope>
</reference>
<reference key="5">
    <citation type="journal article" date="2002" name="Neuron">
        <title>Posttranslational mechanisms control the timing of bHLH function and regulate retinal cell fate.</title>
        <authorList>
            <person name="Moore K.B."/>
            <person name="Schneider M.L."/>
            <person name="Vetter M.L."/>
        </authorList>
    </citation>
    <scope>FUNCTION</scope>
</reference>
<protein>
    <recommendedName>
        <fullName>Glycogen synthase kinase-3 beta</fullName>
        <shortName>GSK-3 beta</shortName>
        <ecNumber>2.7.11.26</ecNumber>
    </recommendedName>
    <alternativeName>
        <fullName>Xgsk-3 protein</fullName>
    </alternativeName>
</protein>
<gene>
    <name type="primary">gsk3b</name>
    <name type="synonym">Xgsk-3</name>
</gene>
<proteinExistence type="evidence at protein level"/>
<organism>
    <name type="scientific">Xenopus laevis</name>
    <name type="common">African clawed frog</name>
    <dbReference type="NCBI Taxonomy" id="8355"/>
    <lineage>
        <taxon>Eukaryota</taxon>
        <taxon>Metazoa</taxon>
        <taxon>Chordata</taxon>
        <taxon>Craniata</taxon>
        <taxon>Vertebrata</taxon>
        <taxon>Euteleostomi</taxon>
        <taxon>Amphibia</taxon>
        <taxon>Batrachia</taxon>
        <taxon>Anura</taxon>
        <taxon>Pipoidea</taxon>
        <taxon>Pipidae</taxon>
        <taxon>Xenopodinae</taxon>
        <taxon>Xenopus</taxon>
        <taxon>Xenopus</taxon>
    </lineage>
</organism>
<comment type="function">
    <text evidence="5 6 7 8">Plays a role in the organization of the formation of the main body axis of developing embryo. Acts as an inhibitor of differentiation of primary neurons. Inhibits the ability of ectopically expressed NEUROD1 and other bHLH factors to promote early retinal cell differentiation. May participate in the Wnt signaling pathway. May regulate the circadian clock via phosphorylation of the major clock components.</text>
</comment>
<comment type="catalytic activity">
    <reaction>
        <text>L-seryl-[tau protein] + ATP = O-phospho-L-seryl-[tau protein] + ADP + H(+)</text>
        <dbReference type="Rhea" id="RHEA:12801"/>
        <dbReference type="Rhea" id="RHEA-COMP:13701"/>
        <dbReference type="Rhea" id="RHEA-COMP:13702"/>
        <dbReference type="ChEBI" id="CHEBI:15378"/>
        <dbReference type="ChEBI" id="CHEBI:29999"/>
        <dbReference type="ChEBI" id="CHEBI:30616"/>
        <dbReference type="ChEBI" id="CHEBI:83421"/>
        <dbReference type="ChEBI" id="CHEBI:456216"/>
        <dbReference type="EC" id="2.7.11.26"/>
    </reaction>
</comment>
<comment type="catalytic activity">
    <reaction>
        <text>L-threonyl-[tau protein] + ATP = O-phospho-L-threonyl-[tau protein] + ADP + H(+)</text>
        <dbReference type="Rhea" id="RHEA:53904"/>
        <dbReference type="Rhea" id="RHEA-COMP:13703"/>
        <dbReference type="Rhea" id="RHEA-COMP:13704"/>
        <dbReference type="ChEBI" id="CHEBI:15378"/>
        <dbReference type="ChEBI" id="CHEBI:30013"/>
        <dbReference type="ChEBI" id="CHEBI:30616"/>
        <dbReference type="ChEBI" id="CHEBI:61977"/>
        <dbReference type="ChEBI" id="CHEBI:456216"/>
        <dbReference type="EC" id="2.7.11.26"/>
    </reaction>
</comment>
<comment type="subcellular location">
    <subcellularLocation>
        <location evidence="1">Cytoplasm</location>
    </subcellularLocation>
    <subcellularLocation>
        <location evidence="1">Nucleus</location>
    </subcellularLocation>
    <subcellularLocation>
        <location evidence="1">Cell membrane</location>
    </subcellularLocation>
</comment>
<comment type="developmental stage">
    <text evidence="6 7 8">Expressed in the unfertilized egg and throughout the early embryonic stages. Expressed in the neural plate at stage 13. Expressed throughout the eye primordia and cranial ganglia at stage 25. Highly expressed in the differentiated retinal ganglion cell layer at stage 40.</text>
</comment>
<comment type="PTM">
    <text>Phosphorylated. Activated by phosphorylation at Tyr-216.</text>
</comment>
<comment type="similarity">
    <text evidence="9">Belongs to the protein kinase superfamily. CMGC Ser/Thr protein kinase family. GSK-3 subfamily.</text>
</comment>
<name>GSK3B_XENLA</name>
<dbReference type="EC" id="2.7.11.26"/>
<dbReference type="EMBL" id="L38492">
    <property type="protein sequence ID" value="AAC42224.1"/>
    <property type="molecule type" value="mRNA"/>
</dbReference>
<dbReference type="EMBL" id="U31862">
    <property type="protein sequence ID" value="AAA84444.1"/>
    <property type="molecule type" value="mRNA"/>
</dbReference>
<dbReference type="EMBL" id="BC108581">
    <property type="protein sequence ID" value="AAI08582.1"/>
    <property type="molecule type" value="mRNA"/>
</dbReference>
<dbReference type="PIR" id="I51425">
    <property type="entry name" value="I51425"/>
</dbReference>
<dbReference type="PIR" id="I51692">
    <property type="entry name" value="I51692"/>
</dbReference>
<dbReference type="RefSeq" id="NP_001083752.1">
    <property type="nucleotide sequence ID" value="NM_001090283.1"/>
</dbReference>
<dbReference type="RefSeq" id="XP_018100414.1">
    <property type="nucleotide sequence ID" value="XM_018244925.1"/>
</dbReference>
<dbReference type="SMR" id="Q91757"/>
<dbReference type="ELM" id="Q91757"/>
<dbReference type="iPTMnet" id="Q91757"/>
<dbReference type="DNASU" id="399097"/>
<dbReference type="GeneID" id="399097"/>
<dbReference type="KEGG" id="xla:399097"/>
<dbReference type="AGR" id="Xenbase:XB-GENE-865674"/>
<dbReference type="CTD" id="399097"/>
<dbReference type="Xenbase" id="XB-GENE-865674">
    <property type="gene designation" value="gsk3b.L"/>
</dbReference>
<dbReference type="OrthoDB" id="272141at2759"/>
<dbReference type="Proteomes" id="UP000186698">
    <property type="component" value="Chromosome 2L"/>
</dbReference>
<dbReference type="Bgee" id="399097">
    <property type="expression patterns" value="Expressed in testis and 19 other cell types or tissues"/>
</dbReference>
<dbReference type="GO" id="GO:0030424">
    <property type="term" value="C:axon"/>
    <property type="evidence" value="ECO:0000318"/>
    <property type="project" value="GO_Central"/>
</dbReference>
<dbReference type="GO" id="GO:0030877">
    <property type="term" value="C:beta-catenin destruction complex"/>
    <property type="evidence" value="ECO:0000318"/>
    <property type="project" value="GO_Central"/>
</dbReference>
<dbReference type="GO" id="GO:0005737">
    <property type="term" value="C:cytoplasm"/>
    <property type="evidence" value="ECO:0000318"/>
    <property type="project" value="GO_Central"/>
</dbReference>
<dbReference type="GO" id="GO:0005829">
    <property type="term" value="C:cytosol"/>
    <property type="evidence" value="ECO:0000318"/>
    <property type="project" value="GO_Central"/>
</dbReference>
<dbReference type="GO" id="GO:0098978">
    <property type="term" value="C:glutamatergic synapse"/>
    <property type="evidence" value="ECO:0000318"/>
    <property type="project" value="GO_Central"/>
</dbReference>
<dbReference type="GO" id="GO:0005634">
    <property type="term" value="C:nucleus"/>
    <property type="evidence" value="ECO:0000318"/>
    <property type="project" value="GO_Central"/>
</dbReference>
<dbReference type="GO" id="GO:0005886">
    <property type="term" value="C:plasma membrane"/>
    <property type="evidence" value="ECO:0007669"/>
    <property type="project" value="UniProtKB-SubCell"/>
</dbReference>
<dbReference type="GO" id="GO:0005524">
    <property type="term" value="F:ATP binding"/>
    <property type="evidence" value="ECO:0007669"/>
    <property type="project" value="UniProtKB-KW"/>
</dbReference>
<dbReference type="GO" id="GO:0008013">
    <property type="term" value="F:beta-catenin binding"/>
    <property type="evidence" value="ECO:0000318"/>
    <property type="project" value="GO_Central"/>
</dbReference>
<dbReference type="GO" id="GO:0004674">
    <property type="term" value="F:protein serine/threonine kinase activity"/>
    <property type="evidence" value="ECO:0000250"/>
    <property type="project" value="UniProtKB"/>
</dbReference>
<dbReference type="GO" id="GO:0050321">
    <property type="term" value="F:tau-protein kinase activity"/>
    <property type="evidence" value="ECO:0000318"/>
    <property type="project" value="GO_Central"/>
</dbReference>
<dbReference type="GO" id="GO:0030154">
    <property type="term" value="P:cell differentiation"/>
    <property type="evidence" value="ECO:0000318"/>
    <property type="project" value="GO_Central"/>
</dbReference>
<dbReference type="GO" id="GO:0008286">
    <property type="term" value="P:insulin receptor signaling pathway"/>
    <property type="evidence" value="ECO:0000318"/>
    <property type="project" value="GO_Central"/>
</dbReference>
<dbReference type="GO" id="GO:0090090">
    <property type="term" value="P:negative regulation of canonical Wnt signaling pathway"/>
    <property type="evidence" value="ECO:0000314"/>
    <property type="project" value="BHF-UCL"/>
</dbReference>
<dbReference type="GO" id="GO:0045892">
    <property type="term" value="P:negative regulation of DNA-templated transcription"/>
    <property type="evidence" value="ECO:0000314"/>
    <property type="project" value="BHF-UCL"/>
</dbReference>
<dbReference type="GO" id="GO:0010719">
    <property type="term" value="P:negative regulation of epithelial to mesenchymal transition"/>
    <property type="evidence" value="ECO:0000250"/>
    <property type="project" value="UniProtKB"/>
</dbReference>
<dbReference type="GO" id="GO:0032007">
    <property type="term" value="P:negative regulation of TOR signaling"/>
    <property type="evidence" value="ECO:0000318"/>
    <property type="project" value="GO_Central"/>
</dbReference>
<dbReference type="GO" id="GO:0007399">
    <property type="term" value="P:nervous system development"/>
    <property type="evidence" value="ECO:0007669"/>
    <property type="project" value="UniProtKB-KW"/>
</dbReference>
<dbReference type="GO" id="GO:0010508">
    <property type="term" value="P:positive regulation of autophagy"/>
    <property type="evidence" value="ECO:0000318"/>
    <property type="project" value="GO_Central"/>
</dbReference>
<dbReference type="GO" id="GO:0043525">
    <property type="term" value="P:positive regulation of neuron apoptotic process"/>
    <property type="evidence" value="ECO:0000318"/>
    <property type="project" value="GO_Central"/>
</dbReference>
<dbReference type="GO" id="GO:0032436">
    <property type="term" value="P:positive regulation of proteasomal ubiquitin-dependent protein catabolic process"/>
    <property type="evidence" value="ECO:0000318"/>
    <property type="project" value="GO_Central"/>
</dbReference>
<dbReference type="GO" id="GO:0070507">
    <property type="term" value="P:regulation of microtubule cytoskeleton organization"/>
    <property type="evidence" value="ECO:0000318"/>
    <property type="project" value="GO_Central"/>
</dbReference>
<dbReference type="GO" id="GO:0010975">
    <property type="term" value="P:regulation of neuron projection development"/>
    <property type="evidence" value="ECO:0000318"/>
    <property type="project" value="GO_Central"/>
</dbReference>
<dbReference type="GO" id="GO:0048511">
    <property type="term" value="P:rhythmic process"/>
    <property type="evidence" value="ECO:0007669"/>
    <property type="project" value="UniProtKB-KW"/>
</dbReference>
<dbReference type="GO" id="GO:0016055">
    <property type="term" value="P:Wnt signaling pathway"/>
    <property type="evidence" value="ECO:0007669"/>
    <property type="project" value="UniProtKB-KW"/>
</dbReference>
<dbReference type="CDD" id="cd14137">
    <property type="entry name" value="STKc_GSK3"/>
    <property type="match status" value="1"/>
</dbReference>
<dbReference type="FunFam" id="1.10.510.10:FF:000055">
    <property type="entry name" value="Glycogen synthase kinase-3 beta"/>
    <property type="match status" value="1"/>
</dbReference>
<dbReference type="FunFam" id="3.30.200.20:FF:000009">
    <property type="entry name" value="Glycogen synthase kinase-3 beta"/>
    <property type="match status" value="1"/>
</dbReference>
<dbReference type="Gene3D" id="3.30.200.20">
    <property type="entry name" value="Phosphorylase Kinase, domain 1"/>
    <property type="match status" value="1"/>
</dbReference>
<dbReference type="Gene3D" id="1.10.510.10">
    <property type="entry name" value="Transferase(Phosphotransferase) domain 1"/>
    <property type="match status" value="1"/>
</dbReference>
<dbReference type="InterPro" id="IPR050591">
    <property type="entry name" value="GSK-3"/>
</dbReference>
<dbReference type="InterPro" id="IPR011009">
    <property type="entry name" value="Kinase-like_dom_sf"/>
</dbReference>
<dbReference type="InterPro" id="IPR000719">
    <property type="entry name" value="Prot_kinase_dom"/>
</dbReference>
<dbReference type="InterPro" id="IPR017441">
    <property type="entry name" value="Protein_kinase_ATP_BS"/>
</dbReference>
<dbReference type="InterPro" id="IPR008271">
    <property type="entry name" value="Ser/Thr_kinase_AS"/>
</dbReference>
<dbReference type="InterPro" id="IPR039192">
    <property type="entry name" value="STKc_GSK3"/>
</dbReference>
<dbReference type="PANTHER" id="PTHR24057">
    <property type="entry name" value="GLYCOGEN SYNTHASE KINASE-3 ALPHA"/>
    <property type="match status" value="1"/>
</dbReference>
<dbReference type="PANTHER" id="PTHR24057:SF8">
    <property type="entry name" value="GLYCOGEN SYNTHASE KINASE-3 BETA"/>
    <property type="match status" value="1"/>
</dbReference>
<dbReference type="Pfam" id="PF00069">
    <property type="entry name" value="Pkinase"/>
    <property type="match status" value="1"/>
</dbReference>
<dbReference type="SMART" id="SM00220">
    <property type="entry name" value="S_TKc"/>
    <property type="match status" value="1"/>
</dbReference>
<dbReference type="SUPFAM" id="SSF56112">
    <property type="entry name" value="Protein kinase-like (PK-like)"/>
    <property type="match status" value="1"/>
</dbReference>
<dbReference type="PROSITE" id="PS00107">
    <property type="entry name" value="PROTEIN_KINASE_ATP"/>
    <property type="match status" value="1"/>
</dbReference>
<dbReference type="PROSITE" id="PS50011">
    <property type="entry name" value="PROTEIN_KINASE_DOM"/>
    <property type="match status" value="1"/>
</dbReference>
<dbReference type="PROSITE" id="PS00108">
    <property type="entry name" value="PROTEIN_KINASE_ST"/>
    <property type="match status" value="1"/>
</dbReference>
<feature type="chain" id="PRO_0000412070" description="Glycogen synthase kinase-3 beta">
    <location>
        <begin position="1"/>
        <end position="420"/>
    </location>
</feature>
<feature type="domain" description="Protein kinase" evidence="2">
    <location>
        <begin position="56"/>
        <end position="340"/>
    </location>
</feature>
<feature type="region of interest" description="Disordered" evidence="4">
    <location>
        <begin position="1"/>
        <end position="50"/>
    </location>
</feature>
<feature type="region of interest" description="Disordered" evidence="4">
    <location>
        <begin position="384"/>
        <end position="420"/>
    </location>
</feature>
<feature type="compositionally biased region" description="Polar residues" evidence="4">
    <location>
        <begin position="1"/>
        <end position="24"/>
    </location>
</feature>
<feature type="compositionally biased region" description="Low complexity" evidence="4">
    <location>
        <begin position="389"/>
        <end position="401"/>
    </location>
</feature>
<feature type="compositionally biased region" description="Low complexity" evidence="4">
    <location>
        <begin position="409"/>
        <end position="420"/>
    </location>
</feature>
<feature type="active site" description="Proton acceptor" evidence="2 3">
    <location>
        <position position="181"/>
    </location>
</feature>
<feature type="binding site" evidence="2">
    <location>
        <begin position="62"/>
        <end position="70"/>
    </location>
    <ligand>
        <name>ATP</name>
        <dbReference type="ChEBI" id="CHEBI:30616"/>
    </ligand>
</feature>
<feature type="binding site" evidence="2">
    <location>
        <position position="85"/>
    </location>
    <ligand>
        <name>ATP</name>
        <dbReference type="ChEBI" id="CHEBI:30616"/>
    </ligand>
</feature>
<feature type="mutagenesis site" description="Inhibits enzymatic activity. Induces duplication of the anterior dorsal axis." evidence="6 7">
    <original>K</original>
    <variation>R</variation>
    <location>
        <position position="85"/>
    </location>
</feature>
<feature type="sequence conflict" description="In Ref. 2; AAA84444." evidence="9" ref="2">
    <original>T</original>
    <variation>S</variation>
    <location>
        <position position="55"/>
    </location>
</feature>
<feature type="sequence conflict" description="In Ref. 2; AAA84444." evidence="9" ref="2">
    <original>L</original>
    <variation>P</variation>
    <location>
        <position position="88"/>
    </location>
</feature>
<feature type="sequence conflict" description="In Ref. 2; AAA84444." evidence="9" ref="2">
    <original>A</original>
    <variation>V</variation>
    <location>
        <position position="336"/>
    </location>
</feature>
<feature type="sequence conflict" description="In Ref. 2; AAA84444." evidence="9" ref="2">
    <original>D</original>
    <variation>N</variation>
    <location>
        <position position="399"/>
    </location>
</feature>